<keyword id="KW-0968">Cytoplasmic vesicle</keyword>
<keyword id="KW-0967">Endosome</keyword>
<keyword id="KW-0333">Golgi apparatus</keyword>
<keyword id="KW-0445">Lipid transport</keyword>
<keyword id="KW-0446">Lipid-binding</keyword>
<keyword id="KW-0458">Lysosome</keyword>
<keyword id="KW-0472">Membrane</keyword>
<keyword id="KW-0597">Phosphoprotein</keyword>
<keyword id="KW-1185">Reference proteome</keyword>
<keyword id="KW-0813">Transport</keyword>
<accession>Q80TY5</accession>
<accession>E9QKX5</accession>
<comment type="function">
    <text evidence="1 2 6 7 8 9">Mediates the transfer of lipids between membranes at organelle contact sites (By similarity). Binds phosphatidylinositol 3-phosphate (PubMed:30962439). Functions as a tethering factor in the slow endocytic recycling pathway, to assist traffic between early and recycling endosomes (By similarity). Involved in the transport of proacrosomal vesicles to the nuclear dense lamina (NDL) during spermatid development (PubMed:31218450). Plays a role in the assembly of the Golgi apparatus, possibly by mediating trafficking to the Golgi membrane (By similarity). Plays a role in the development of the nervous system, and may be required for neuron projection development (PubMed:31495077). May also play a role during adipose tissue development (By similarity). Required for maintenance of the ocular lens (PubMed:32915983). Required for proper organization of the Golgi (By similarity).</text>
</comment>
<comment type="subunit">
    <text evidence="2 6">Interacts with STX6 (PubMed:30962439). Interacts with STX12 (via N-terminus) (PubMed:30962439). Interacts with RAB6A isoform 1 (GTP-bound) and isoform 2 (GTP-bound) (By similarity). Interacts with RAB6B (GTP-bound) (By similarity).</text>
</comment>
<comment type="subcellular location">
    <subcellularLocation>
        <location evidence="6">Recycling endosome membrane</location>
        <topology evidence="12">Peripheral membrane protein</topology>
    </subcellularLocation>
    <subcellularLocation>
        <location evidence="7">Cytoplasmic vesicle</location>
        <location evidence="7">Secretory vesicle</location>
        <location evidence="7">Acrosome membrane</location>
        <topology evidence="12">Peripheral membrane protein</topology>
    </subcellularLocation>
    <subcellularLocation>
        <location evidence="2">Golgi apparatus</location>
        <location evidence="2">cis-Golgi network membrane</location>
        <topology evidence="2">Peripheral membrane protein</topology>
    </subcellularLocation>
    <subcellularLocation>
        <location evidence="2">Endoplasmic reticulum-Golgi intermediate compartment membrane</location>
        <topology evidence="2">Peripheral membrane protein</topology>
    </subcellularLocation>
    <subcellularLocation>
        <location evidence="2">Golgi apparatus</location>
        <location evidence="2">trans-Golgi network membrane</location>
        <topology evidence="2">Peripheral membrane protein</topology>
    </subcellularLocation>
    <subcellularLocation>
        <location evidence="2">Early endosome membrane</location>
        <topology evidence="12">Peripheral membrane protein</topology>
    </subcellularLocation>
    <subcellularLocation>
        <location evidence="2">Lysosome membrane</location>
        <topology evidence="12">Peripheral membrane protein</topology>
    </subcellularLocation>
    <text evidence="7">Localizes to proacrosomal and acrosomal vesicles and not the Golgi apparatus during acrosome formation.</text>
</comment>
<comment type="tissue specificity">
    <text evidence="5">Ubiquitously expressed in all examined tissues.</text>
</comment>
<comment type="similarity">
    <text evidence="12">Belongs to the VPS13 family.</text>
</comment>
<sequence length="3993" mass="444015">MLESYVTPILMSYVNRYIKNLKPSDLQLSLWGGDVVLSKLELKLDVLEQELKLPFTFLSGHIHELRIHVPWTKLGSEPVVITINTMECILKLKDGIQDDHESCGSNSTNRSTAENTKSSIKPRRIQQAAPADPDLPPGYVQSLIRRVVNNVNIVINNLILKYVEDDIVLSVNITSAECYTVGELWDRAFMDISATDLVLRKAINFSDCTVCLDKRNASGKIEFYQDPLLYKCSFRTRLHFTYDNLNSKMPSVIKIHTLVESLKLSITDQQLPMFIRIMQLGIALYYGEIGNFKDGETEDPPCLSKDTLANLTGTEEESRIDMQYPAPYKGQELYSQDYEEPQGWVSWAWSFVPAIVSYDDGEEDDLGTDPASIMHQQKAQTLKDPIVSVGFYCTKATVTFKLTEMQAENSYYSPQKVKSKEVLCWEQEGTTIEALMMGEPFFDCQIGFVGCRAMCLKGILGVKDFEEHMNRSETEACFFICGENLSTKGLTYLTNSLFDYRSPENNGTRAEFILDAAHHKETHTDIAGIQRFGAFYMDYLYTVEHSSGKGPTSQQDFPSGKNEDLGIVQEKSTKSLVIGPLDCRLDSSAVHRVLKMIVCALEHEYEPYSRLKPESKDEKETVLDPEEVSSLEEYIPTRHTSVTLLKCTCTVFMAEFNLLDCLLPVIMGGKNSSNVTNATNFQSLRPLPSIQILVDKINLEHSVPMYAEQLVHVVSSLNQPSDNLLHYCYVHCYLKVFGFQAGLTCLDHSGSYCLPAPIIPSFSTALYGKLLKLPALWTKRSQTVVTEGIFELPNLTIQATRAQTLLLQAIYQSWSHIGNVSSSTVNEALMNEVFPMTGVKSKNPLPTLEGSIQNVELKYCSTSLVKCASGTLGSIKICAKAPGDSGKEKLIPLLQGPSDTRDLHSSKWLNESRKPESLLAPDLIAFTIQVPQYMDYCHHSGAVFLCSVQGLAVNIDPILYTWVIYQPQKRANRHAQQQPVVAVPLVTSVNRRKEDELSIGSAPLGKQQSYQASEYASSPIKTKTVTESRPVSVPVKAVLRVHEECRSPEDKMKEFIAILWNAVKSLTLQLDVQSCCVFIPNDNLPSPSTIVSGDIPGTVRSWYHGQTSIPGTLVLCLPQIKIISAGHKYMEPLQEIPFVIPRPILEEGDAFPWTISLHHFSIYTLLGKQVTLSLVEPMGCTSTLAVTSQKLLPVGPDGRHSFVVCLHVDLESLEIKCSNPQVQLIYELADTMSKVWSKIQKRGNLSPSSVYPETVAGPIPGSPVWSSVGTAPPDTSTCSPSADIGTTTEGDSVQAGDDSPFSDSVTLEQTTSNIGGSSGRVSLWMQWVLPKATVKLFAPDLEKKGTEVCMVSELEDLSASIDVQDVYTKVKCKVESFSIDHYQSRPGEGWQSGHFEGVFLQCKEKPVTTTKLLDGAHQQHGFLSLTYTKAVTKNVRHKLTSRNERRSFYKLSEGLMDGSPHFLHEILLSAQAFDIVVCFPLLNAIASVFHTKLPKTQREKRKSSGQPMRTHTLTSRNLPLIYINTSVIRIFVPQTEETQSTVAVNQAAKEDTMVLKVGSIAMAPQADNPLGRSVLRKDIYQKALNLGILRDPGSEIEDRQYQIDLQSINIGTAQWDQLKPEKGSGSGGVPTESERNSQNPALEWNMASSIQRHQERRAILTPILTDFSVRITGAPAIIFTKIISQENLHMEEILVCGHSLEVNITTNLDFFLSVAQVQLLHQLIVANMTGLEPSTKATEISKQEQKKVDTFDGGTAETSSRYSGAQDSGIGSDSVKIRIVQIEQYSGASQHRIARPSHQSSIVKNLNFIPFDIFITASRISLMTYSSVALPKFKLPEQKEDGKTGRTFLNLAEVDSDVAKPNQACVSMVTAEDPLSSSTSFSSGKKVRVLSLESLHASTRSSARQALGVTVVRQPGRRGTGDLELDLFLHLIVSQPSLLLSCHHRKQRVEVSIFDAMLKGVPSDYTCTDPGKTLPEASDYNIVWLQTVPGETDSKSGIPPSLVTLHIKDFLNGPADIYLDVSKPLKANLSFTKLDQINHFLKKIKKAHSSAHSKETSTPSDSILNMDEPPVPKCYRGKLSKTKVHCDEAQKTSFQENIWRAISCFQKVSVHTTQIVVSMETVPHPHKPCVLASLSNLNGSLTVKAAQKVPGASLGSSFLLSIHDVLLKTSLKERSRILIGPFSATVNLEAKWCKHSGNPGPQQSIPKISMDLRGGLLQVFWGQEHLNCLALLHELFNGYLQEGKSEMPVPESAPQMPSPVEKTQAFKTEQSSDDLRTGIFQYVQDAESLKLPGVYEVLFYNETEESPGMMLWRYPEPRVLTLVRITPVPFNTTEDPDISTADLGDVLQVPCGLEYWDELQKVFVAFQEFSLSESKVCELQLPDINLVHDQKKLVSSDLWRIVLNNNQNTTDDQSSASESGSQSTCEPLVTPTALAACTRVDSCFTPWFVPSLCMSFQFAHLEFRLCHHLDQLGTASPQYLQPFISDKNVPSELEYMIISFREPNLHLRQWNSGPVCQEIKFSSQMDCKLLECRNVTMQTVVKPFGICGQMALSSDGVQKLLDSTVIVDSVLVNFGQHVVHSLNTAIQAWQQNKCPEVEELVFSHFVICNDTQETLRFGQVDTDENILLASLHSHQYSWRSHKSPQLLHICIEGWGNWRWSEPFTVDHAGTFIRTIQYKGRTASLIIKVRALSGVQKQIIICGRQIICSYLSQSIELKVVQHYIGQDGQAVVREHFDCLTAKQKLPSYILENNELTELCVKAKGDEDWSRDVCLEPKASEYSTVIQVPTSNSSIIYVWCTVLTLEPNSQVQQRMIVFSPLFIMRSHLPDPIIIHLEKRSLGLSETQIIPGRGQENPLQNVEPDLVHHLTFQAREEYDPSDCAVPISTALIKQIATKIQPGGTVNEMLDEFYGPEKSQEPTWPYSNKDSDRNEQLSQWDSPMRVKLSIWKPYVRTLLIELLPWALLINQSKWDLWLFEGEKIVLQVPAGKIIIPPNFQEAFQIGIYWENTNTVHKTLAIKLVHNLTSPKWKDGGNGEVVTLDEEAFVDAEIRLGAFPGHQKLCQFCISSMVQHGIQVIQIEDKTTVINNTPYQIVYKPHLAISNSYSGKEHCHVPDSATFSICPGGEHPAVRSSSLPCWDVTPAVGSSELDTATLQKQILLGFSPVPGADSAQCWSLPAIIGGEFPRQSVAVPFGTGRENGFCTRAIALTYQEHLGVTYITLSEDPSPRVVFHNRCPVPMLMKENIRDIPKFDVYCKKIPPESSVHHELYHQIISYPDCKTKDLLPSLFLRIDSMEEMTAEWSDPVDINSQGTQVVFLTGFGYVYVDIAQQCGTVFIILAPEGKAGPIFTSTSRALERMVTFRMFITQLSLAVSDDLTHQAPSELLRLTLDNVFLHVSPVPALLPGEEPPSSFFQLYGVEVYCGDLQLDNQLYNKSNFHFAVLVCQGERTDPAQYSRVQSLLVSSKALEEYKENCFIKLCLTVSEGKDILLDVSEFTFELKPARLYVEDTFVYYIKTLFDTYLPPSRMSGHHAQLFTGQQVLPVQVTQHAKALVNAVKLRKLLIQPVNLLISIHASLKLYIASDHTPLSFSVFERGPVFTTARQLVHALAMHYAAGALFRAGWVVGSLEILGSPASLVRSIGNGISDFFRLPYEGLTRGPGAFVSGVSRGTTSFVKHISKGALTSITNLATSLARNMGRLSLDEEHYNRQEEWRRQLPESLGEGLRQGLSRLGISLLGAIAGIVDQPMQNFQKTSETQASAGHKAKGVISGVGKGIMGVFTKPIGGAAELVSQTGYGILHGAGLSQLPKQRCQPTHLYADQAPNSHVKYVWKMLQSLGRPEVHMALDVVLVRGSGQEHEGCLLLTSEVLFVVSISEDTQQQAFPITEISCAQDTKQNNLLTVQLKQPRVASDVEIDGARERLSEQQFKRLVDYIAKTSCHLAPSCSSMQTCSVVAVEPPPATVKTYHYLVDPHFAQVFISKFTMVKNKALRKGFS</sequence>
<proteinExistence type="evidence at protein level"/>
<dbReference type="EMBL" id="AC121598">
    <property type="status" value="NOT_ANNOTATED_CDS"/>
    <property type="molecule type" value="Genomic_DNA"/>
</dbReference>
<dbReference type="EMBL" id="AC122241">
    <property type="status" value="NOT_ANNOTATED_CDS"/>
    <property type="molecule type" value="Genomic_DNA"/>
</dbReference>
<dbReference type="EMBL" id="AC144772">
    <property type="status" value="NOT_ANNOTATED_CDS"/>
    <property type="molecule type" value="Genomic_DNA"/>
</dbReference>
<dbReference type="EMBL" id="AC157521">
    <property type="status" value="NOT_ANNOTATED_CDS"/>
    <property type="molecule type" value="Genomic_DNA"/>
</dbReference>
<dbReference type="EMBL" id="AC166356">
    <property type="status" value="NOT_ANNOTATED_CDS"/>
    <property type="molecule type" value="Genomic_DNA"/>
</dbReference>
<dbReference type="EMBL" id="AK122302">
    <property type="protein sequence ID" value="BAC65584.1"/>
    <property type="molecule type" value="mRNA"/>
</dbReference>
<dbReference type="CCDS" id="CCDS49592.1"/>
<dbReference type="RefSeq" id="NP_796125.2">
    <property type="nucleotide sequence ID" value="NM_177151.4"/>
</dbReference>
<dbReference type="BioGRID" id="578014">
    <property type="interactions" value="6"/>
</dbReference>
<dbReference type="FunCoup" id="Q80TY5">
    <property type="interactions" value="2707"/>
</dbReference>
<dbReference type="STRING" id="10090.ENSMUSP00000045490"/>
<dbReference type="GlyGen" id="Q80TY5">
    <property type="glycosylation" value="3 sites, 2 N-linked glycans (2 sites)"/>
</dbReference>
<dbReference type="iPTMnet" id="Q80TY5"/>
<dbReference type="PhosphoSitePlus" id="Q80TY5"/>
<dbReference type="jPOST" id="Q80TY5"/>
<dbReference type="PaxDb" id="10090-ENSMUSP00000045490"/>
<dbReference type="ProteomicsDB" id="275181"/>
<dbReference type="Antibodypedia" id="26091">
    <property type="antibodies" value="90 antibodies from 24 providers"/>
</dbReference>
<dbReference type="Ensembl" id="ENSMUST00000048646.9">
    <property type="protein sequence ID" value="ENSMUSP00000045490.8"/>
    <property type="gene ID" value="ENSMUSG00000037646.11"/>
</dbReference>
<dbReference type="GeneID" id="666173"/>
<dbReference type="KEGG" id="mmu:666173"/>
<dbReference type="AGR" id="MGI:1916380"/>
<dbReference type="CTD" id="157680"/>
<dbReference type="MGI" id="MGI:1916380">
    <property type="gene designation" value="Vps13b"/>
</dbReference>
<dbReference type="VEuPathDB" id="HostDB:ENSMUSG00000037646"/>
<dbReference type="eggNOG" id="KOG1809">
    <property type="taxonomic scope" value="Eukaryota"/>
</dbReference>
<dbReference type="GeneTree" id="ENSGT00940000154684"/>
<dbReference type="InParanoid" id="Q80TY5"/>
<dbReference type="OMA" id="SFYMPRI"/>
<dbReference type="OrthoDB" id="445152at2759"/>
<dbReference type="PhylomeDB" id="Q80TY5"/>
<dbReference type="TreeFam" id="TF323503"/>
<dbReference type="BioGRID-ORCS" id="666173">
    <property type="hits" value="1 hit in 75 CRISPR screens"/>
</dbReference>
<dbReference type="ChiTaRS" id="Vps13b">
    <property type="organism name" value="mouse"/>
</dbReference>
<dbReference type="PRO" id="PR:Q80TY5"/>
<dbReference type="Proteomes" id="UP000000589">
    <property type="component" value="Chromosome 15"/>
</dbReference>
<dbReference type="RNAct" id="Q80TY5">
    <property type="molecule type" value="protein"/>
</dbReference>
<dbReference type="Bgee" id="ENSMUSG00000037646">
    <property type="expression patterns" value="Expressed in paneth cell and 221 other cell types or tissues"/>
</dbReference>
<dbReference type="ExpressionAtlas" id="Q80TY5">
    <property type="expression patterns" value="baseline and differential"/>
</dbReference>
<dbReference type="GO" id="GO:0002080">
    <property type="term" value="C:acrosomal membrane"/>
    <property type="evidence" value="ECO:0000314"/>
    <property type="project" value="UniProtKB"/>
</dbReference>
<dbReference type="GO" id="GO:0033106">
    <property type="term" value="C:cis-Golgi network membrane"/>
    <property type="evidence" value="ECO:0000250"/>
    <property type="project" value="UniProtKB"/>
</dbReference>
<dbReference type="GO" id="GO:0031901">
    <property type="term" value="C:early endosome membrane"/>
    <property type="evidence" value="ECO:0007669"/>
    <property type="project" value="UniProtKB-SubCell"/>
</dbReference>
<dbReference type="GO" id="GO:0033116">
    <property type="term" value="C:endoplasmic reticulum-Golgi intermediate compartment membrane"/>
    <property type="evidence" value="ECO:0000250"/>
    <property type="project" value="UniProtKB"/>
</dbReference>
<dbReference type="GO" id="GO:0000139">
    <property type="term" value="C:Golgi membrane"/>
    <property type="evidence" value="ECO:0007669"/>
    <property type="project" value="Ensembl"/>
</dbReference>
<dbReference type="GO" id="GO:0005765">
    <property type="term" value="C:lysosomal membrane"/>
    <property type="evidence" value="ECO:0007669"/>
    <property type="project" value="UniProtKB-SubCell"/>
</dbReference>
<dbReference type="GO" id="GO:0055038">
    <property type="term" value="C:recycling endosome membrane"/>
    <property type="evidence" value="ECO:0007669"/>
    <property type="project" value="UniProtKB-SubCell"/>
</dbReference>
<dbReference type="GO" id="GO:0032588">
    <property type="term" value="C:trans-Golgi network membrane"/>
    <property type="evidence" value="ECO:0000250"/>
    <property type="project" value="UniProtKB"/>
</dbReference>
<dbReference type="GO" id="GO:0032266">
    <property type="term" value="F:phosphatidylinositol-3-phosphate binding"/>
    <property type="evidence" value="ECO:0000314"/>
    <property type="project" value="UniProtKB"/>
</dbReference>
<dbReference type="GO" id="GO:0001675">
    <property type="term" value="P:acrosome assembly"/>
    <property type="evidence" value="ECO:0000315"/>
    <property type="project" value="UniProtKB"/>
</dbReference>
<dbReference type="GO" id="GO:0060612">
    <property type="term" value="P:adipose tissue development"/>
    <property type="evidence" value="ECO:0000250"/>
    <property type="project" value="UniProtKB"/>
</dbReference>
<dbReference type="GO" id="GO:0007420">
    <property type="term" value="P:brain development"/>
    <property type="evidence" value="ECO:0000315"/>
    <property type="project" value="MGI"/>
</dbReference>
<dbReference type="GO" id="GO:0007417">
    <property type="term" value="P:central nervous system development"/>
    <property type="evidence" value="ECO:0000315"/>
    <property type="project" value="UniProtKB"/>
</dbReference>
<dbReference type="GO" id="GO:0021542">
    <property type="term" value="P:dentate gyrus development"/>
    <property type="evidence" value="ECO:0000315"/>
    <property type="project" value="MGI"/>
</dbReference>
<dbReference type="GO" id="GO:0007030">
    <property type="term" value="P:Golgi organization"/>
    <property type="evidence" value="ECO:0000250"/>
    <property type="project" value="UniProtKB"/>
</dbReference>
<dbReference type="GO" id="GO:0090168">
    <property type="term" value="P:Golgi reassembly"/>
    <property type="evidence" value="ECO:0000250"/>
    <property type="project" value="UniProtKB"/>
</dbReference>
<dbReference type="GO" id="GO:0060323">
    <property type="term" value="P:head morphogenesis"/>
    <property type="evidence" value="ECO:0000315"/>
    <property type="project" value="MGI"/>
</dbReference>
<dbReference type="GO" id="GO:0006869">
    <property type="term" value="P:lipid transport"/>
    <property type="evidence" value="ECO:0007669"/>
    <property type="project" value="UniProtKB-KW"/>
</dbReference>
<dbReference type="GO" id="GO:0036438">
    <property type="term" value="P:maintenance of lens transparency"/>
    <property type="evidence" value="ECO:0000315"/>
    <property type="project" value="UniProtKB"/>
</dbReference>
<dbReference type="GO" id="GO:0007613">
    <property type="term" value="P:memory"/>
    <property type="evidence" value="ECO:0000315"/>
    <property type="project" value="MGI"/>
</dbReference>
<dbReference type="GO" id="GO:0035264">
    <property type="term" value="P:multicellular organism growth"/>
    <property type="evidence" value="ECO:0000315"/>
    <property type="project" value="MGI"/>
</dbReference>
<dbReference type="GO" id="GO:0007517">
    <property type="term" value="P:muscle organ development"/>
    <property type="evidence" value="ECO:0000315"/>
    <property type="project" value="MGI"/>
</dbReference>
<dbReference type="GO" id="GO:0007399">
    <property type="term" value="P:nervous system development"/>
    <property type="evidence" value="ECO:0000250"/>
    <property type="project" value="UniProtKB"/>
</dbReference>
<dbReference type="GO" id="GO:0032458">
    <property type="term" value="P:slow endocytic recycling"/>
    <property type="evidence" value="ECO:0000250"/>
    <property type="project" value="UniProtKB"/>
</dbReference>
<dbReference type="GO" id="GO:0035176">
    <property type="term" value="P:social behavior"/>
    <property type="evidence" value="ECO:0000315"/>
    <property type="project" value="MGI"/>
</dbReference>
<dbReference type="GO" id="GO:0016192">
    <property type="term" value="P:vesicle-mediated transport"/>
    <property type="evidence" value="ECO:0000250"/>
    <property type="project" value="UniProtKB"/>
</dbReference>
<dbReference type="InterPro" id="IPR056747">
    <property type="entry name" value="VPS13-like_M"/>
</dbReference>
<dbReference type="InterPro" id="IPR026854">
    <property type="entry name" value="VPS13_N"/>
</dbReference>
<dbReference type="InterPro" id="IPR009543">
    <property type="entry name" value="VPS13_VAB"/>
</dbReference>
<dbReference type="InterPro" id="IPR039782">
    <property type="entry name" value="VPS13B"/>
</dbReference>
<dbReference type="PANTHER" id="PTHR12517:SF0">
    <property type="entry name" value="INTERMEMBRANE LIPID TRANSFER PROTEIN VPS13B"/>
    <property type="match status" value="1"/>
</dbReference>
<dbReference type="PANTHER" id="PTHR12517">
    <property type="entry name" value="VACUOLAR PROTEIN SORTING-ASSOCIATED PROTEIN 13B"/>
    <property type="match status" value="1"/>
</dbReference>
<dbReference type="Pfam" id="PF25033">
    <property type="entry name" value="VPS13_M"/>
    <property type="match status" value="1"/>
</dbReference>
<dbReference type="Pfam" id="PF12624">
    <property type="entry name" value="VPS13_N"/>
    <property type="match status" value="1"/>
</dbReference>
<dbReference type="Pfam" id="PF25036">
    <property type="entry name" value="VPS13_VAB"/>
    <property type="match status" value="1"/>
</dbReference>
<organism>
    <name type="scientific">Mus musculus</name>
    <name type="common">Mouse</name>
    <dbReference type="NCBI Taxonomy" id="10090"/>
    <lineage>
        <taxon>Eukaryota</taxon>
        <taxon>Metazoa</taxon>
        <taxon>Chordata</taxon>
        <taxon>Craniata</taxon>
        <taxon>Vertebrata</taxon>
        <taxon>Euteleostomi</taxon>
        <taxon>Mammalia</taxon>
        <taxon>Eutheria</taxon>
        <taxon>Euarchontoglires</taxon>
        <taxon>Glires</taxon>
        <taxon>Rodentia</taxon>
        <taxon>Myomorpha</taxon>
        <taxon>Muroidea</taxon>
        <taxon>Muridae</taxon>
        <taxon>Murinae</taxon>
        <taxon>Mus</taxon>
        <taxon>Mus</taxon>
    </lineage>
</organism>
<protein>
    <recommendedName>
        <fullName evidence="12">Intermembrane lipid transfer protein VPS13B</fullName>
    </recommendedName>
    <alternativeName>
        <fullName>Cohen syndrome protein 1 homolog</fullName>
    </alternativeName>
    <alternativeName>
        <fullName>Vacuolar protein sorting-associated protein 13B</fullName>
    </alternativeName>
</protein>
<reference key="1">
    <citation type="journal article" date="2009" name="PLoS Biol.">
        <title>Lineage-specific biology revealed by a finished genome assembly of the mouse.</title>
        <authorList>
            <person name="Church D.M."/>
            <person name="Goodstadt L."/>
            <person name="Hillier L.W."/>
            <person name="Zody M.C."/>
            <person name="Goldstein S."/>
            <person name="She X."/>
            <person name="Bult C.J."/>
            <person name="Agarwala R."/>
            <person name="Cherry J.L."/>
            <person name="DiCuccio M."/>
            <person name="Hlavina W."/>
            <person name="Kapustin Y."/>
            <person name="Meric P."/>
            <person name="Maglott D."/>
            <person name="Birtle Z."/>
            <person name="Marques A.C."/>
            <person name="Graves T."/>
            <person name="Zhou S."/>
            <person name="Teague B."/>
            <person name="Potamousis K."/>
            <person name="Churas C."/>
            <person name="Place M."/>
            <person name="Herschleb J."/>
            <person name="Runnheim R."/>
            <person name="Forrest D."/>
            <person name="Amos-Landgraf J."/>
            <person name="Schwartz D.C."/>
            <person name="Cheng Z."/>
            <person name="Lindblad-Toh K."/>
            <person name="Eichler E.E."/>
            <person name="Ponting C.P."/>
        </authorList>
    </citation>
    <scope>NUCLEOTIDE SEQUENCE [LARGE SCALE GENOMIC DNA]</scope>
    <source>
        <strain>C57BL/6J</strain>
    </source>
</reference>
<reference key="2">
    <citation type="journal article" date="2003" name="DNA Res.">
        <title>Prediction of the coding sequences of mouse homologues of KIAA gene: II. The complete nucleotide sequences of 400 mouse KIAA-homologous cDNAs identified by screening of terminal sequences of cDNA clones randomly sampled from size-fractionated libraries.</title>
        <authorList>
            <person name="Okazaki N."/>
            <person name="Kikuno R."/>
            <person name="Ohara R."/>
            <person name="Inamoto S."/>
            <person name="Aizawa H."/>
            <person name="Yuasa S."/>
            <person name="Nakajima D."/>
            <person name="Nagase T."/>
            <person name="Ohara O."/>
            <person name="Koga H."/>
        </authorList>
    </citation>
    <scope>NUCLEOTIDE SEQUENCE [LARGE SCALE MRNA] OF 2391-3993</scope>
    <source>
        <tissue>Brain</tissue>
    </source>
</reference>
<reference key="3">
    <citation type="journal article" date="2009" name="Hum. Mutat.">
        <title>Expanded mutational spectrum in Cohen syndrome, tissue expression, and transcript variants of COH1.</title>
        <authorList>
            <person name="Seifert W."/>
            <person name="Holder-Espinasse M."/>
            <person name="Kuehnisch J."/>
            <person name="Kahrizi K."/>
            <person name="Tzschach A."/>
            <person name="Garshasbi M."/>
            <person name="Najmabadi H."/>
            <person name="Walter Kuss A."/>
            <person name="Kress W."/>
            <person name="Laureys G."/>
            <person name="Loeys B."/>
            <person name="Brilstra E."/>
            <person name="Mancini G.M.S."/>
            <person name="Dollfus H."/>
            <person name="Dahan K."/>
            <person name="Apse K."/>
            <person name="Hennies H.C."/>
            <person name="Horn D."/>
        </authorList>
    </citation>
    <scope>TISSUE SPECIFICITY</scope>
</reference>
<reference key="4">
    <citation type="journal article" date="2010" name="Cell">
        <title>A tissue-specific atlas of mouse protein phosphorylation and expression.</title>
        <authorList>
            <person name="Huttlin E.L."/>
            <person name="Jedrychowski M.P."/>
            <person name="Elias J.E."/>
            <person name="Goswami T."/>
            <person name="Rad R."/>
            <person name="Beausoleil S.A."/>
            <person name="Villen J."/>
            <person name="Haas W."/>
            <person name="Sowa M.E."/>
            <person name="Gygi S.P."/>
        </authorList>
    </citation>
    <scope>IDENTIFICATION BY MASS SPECTROMETRY [LARGE SCALE ANALYSIS]</scope>
    <source>
        <tissue>Kidney</tissue>
        <tissue>Liver</tissue>
        <tissue>Lung</tissue>
        <tissue>Pancreas</tissue>
        <tissue>Spleen</tissue>
        <tissue>Testis</tissue>
    </source>
</reference>
<reference key="5">
    <citation type="journal article" date="2019" name="Exp. Neurobiol.">
        <title>Spatial Learning and Motor Deficits in Vacuolar Protein Sorting-associated Protein 13b (Vps13b) Mutant Mouse.</title>
        <authorList>
            <person name="Kim M.J."/>
            <person name="Lee R.U."/>
            <person name="Oh J."/>
            <person name="Choi J.E."/>
            <person name="Kim H."/>
            <person name="Lee K."/>
            <person name="Hwang S.K."/>
            <person name="Lee J.H."/>
            <person name="Lee J.A."/>
            <person name="Kaang B.K."/>
            <person name="Lim C.S."/>
            <person name="Lee Y.S."/>
        </authorList>
    </citation>
    <scope>FUNCTION</scope>
    <scope>MUTAGENESIS OF 1-MET--GLN-49</scope>
</reference>
<reference key="6">
    <citation type="journal article" date="2019" name="Nat. Commun.">
        <title>SNAREs define targeting specificity of trafficking vesicles by combinatorial interaction with tethering factors.</title>
        <authorList>
            <person name="Koike S."/>
            <person name="Jahn R."/>
        </authorList>
    </citation>
    <scope>FUNCTION</scope>
    <scope>INTERACTION WITH STX6 AND STX12</scope>
    <scope>SUBCELLULAR LOCATION</scope>
</reference>
<reference key="7">
    <citation type="journal article" date="2020" name="Cell. Mol. Life Sci.">
        <title>Vps13b is required for acrosome biogenesis through functions in Golgi dynamic and membrane trafficking.</title>
        <authorList>
            <person name="Da Costa R."/>
            <person name="Bordessoules M."/>
            <person name="Guilleman M."/>
            <person name="Carmignac V."/>
            <person name="Lhussiez V."/>
            <person name="Courot H."/>
            <person name="Bataille A."/>
            <person name="Chlemaire A."/>
            <person name="Bruno C."/>
            <person name="Fauque P."/>
            <person name="Thauvin C."/>
            <person name="Faivre L."/>
            <person name="Duplomb L."/>
        </authorList>
    </citation>
    <scope>FUNCTION</scope>
    <scope>SUBCELLULAR LOCATION</scope>
</reference>
<reference key="8">
    <citation type="journal article" date="2020" name="Invest. Ophthalmol. Vis. Sci.">
        <title>Cohen Syndrome-Associated Cataract Is Explained by VPS13B Functions in Lens Homeostasis and Is Modified by Additional Genetic Factors.</title>
        <authorList>
            <person name="Lhussiez V."/>
            <person name="Dubus E."/>
            <person name="Cesar Q."/>
            <person name="Acar N."/>
            <person name="Nandrot E.F."/>
            <person name="Simonutti M."/>
            <person name="Audo I."/>
            <person name="Lize E."/>
            <person name="Nguyen S."/>
            <person name="Geissler A."/>
            <person name="Bouchot A."/>
            <person name="Ansar M."/>
            <person name="Picaud S."/>
            <person name="Thauvin-Robinet C."/>
            <person name="Olivier-Faivre L."/>
            <person name="Duplomb L."/>
            <person name="Da Costa R."/>
        </authorList>
    </citation>
    <scope>FUNCTION</scope>
</reference>
<gene>
    <name evidence="11 13" type="primary">Vps13b</name>
    <name evidence="10" type="synonym">Coh1</name>
    <name type="synonym">Kiaa0532</name>
</gene>
<feature type="chain" id="PRO_0000065881" description="Intermembrane lipid transfer protein VPS13B">
    <location>
        <begin position="1"/>
        <end position="3993"/>
    </location>
</feature>
<feature type="domain" description="Chorein N-terminal" evidence="3">
    <location>
        <begin position="2"/>
        <end position="102"/>
    </location>
</feature>
<feature type="domain" description="SHR-BD" evidence="3">
    <location>
        <begin position="2604"/>
        <end position="2683"/>
    </location>
</feature>
<feature type="region of interest" description="Disordered" evidence="4">
    <location>
        <begin position="100"/>
        <end position="133"/>
    </location>
</feature>
<feature type="region of interest" description="Disordered" evidence="4">
    <location>
        <begin position="1262"/>
        <end position="1303"/>
    </location>
</feature>
<feature type="region of interest" description="Disordered" evidence="4">
    <location>
        <begin position="1616"/>
        <end position="1637"/>
    </location>
</feature>
<feature type="region of interest" description="Disordered" evidence="4">
    <location>
        <begin position="1735"/>
        <end position="1770"/>
    </location>
</feature>
<feature type="region of interest" description="Disordered" evidence="4">
    <location>
        <begin position="2048"/>
        <end position="2067"/>
    </location>
</feature>
<feature type="region of interest" description="Localizes the protein to the Golgi apparatus" evidence="2">
    <location>
        <begin position="3880"/>
        <end position="3993"/>
    </location>
</feature>
<feature type="compositionally biased region" description="Polar residues" evidence="4">
    <location>
        <begin position="103"/>
        <end position="119"/>
    </location>
</feature>
<feature type="compositionally biased region" description="Polar residues" evidence="4">
    <location>
        <begin position="1264"/>
        <end position="1291"/>
    </location>
</feature>
<feature type="compositionally biased region" description="Basic and acidic residues" evidence="4">
    <location>
        <begin position="1739"/>
        <end position="1750"/>
    </location>
</feature>
<feature type="compositionally biased region" description="Polar residues" evidence="4">
    <location>
        <begin position="1756"/>
        <end position="1770"/>
    </location>
</feature>
<feature type="modified residue" description="Phosphoserine" evidence="2">
    <location>
        <position position="413"/>
    </location>
</feature>
<feature type="modified residue" description="Phosphoserine" evidence="2">
    <location>
        <position position="998"/>
    </location>
</feature>
<feature type="modified residue" description="Phosphoserine" evidence="2">
    <location>
        <position position="1001"/>
    </location>
</feature>
<feature type="modified residue" description="Phosphoserine" evidence="2">
    <location>
        <position position="1032"/>
    </location>
</feature>
<feature type="modified residue" description="Phosphoserine" evidence="2">
    <location>
        <position position="1789"/>
    </location>
</feature>
<feature type="mutagenesis site" description="Results in hypoactivity, impaired motor coordination and spatial learning." evidence="8">
    <location>
        <begin position="1"/>
        <end position="49"/>
    </location>
</feature>
<feature type="sequence conflict" description="In Ref. 2; BAC65584." evidence="12" ref="2">
    <original>V</original>
    <variation>I</variation>
    <location>
        <position position="2402"/>
    </location>
</feature>
<name>VP13B_MOUSE</name>
<evidence type="ECO:0000250" key="1">
    <source>
        <dbReference type="UniProtKB" id="Q07878"/>
    </source>
</evidence>
<evidence type="ECO:0000250" key="2">
    <source>
        <dbReference type="UniProtKB" id="Q7Z7G8"/>
    </source>
</evidence>
<evidence type="ECO:0000255" key="3"/>
<evidence type="ECO:0000256" key="4">
    <source>
        <dbReference type="SAM" id="MobiDB-lite"/>
    </source>
</evidence>
<evidence type="ECO:0000269" key="5">
    <source>
    </source>
</evidence>
<evidence type="ECO:0000269" key="6">
    <source>
    </source>
</evidence>
<evidence type="ECO:0000269" key="7">
    <source>
    </source>
</evidence>
<evidence type="ECO:0000269" key="8">
    <source>
    </source>
</evidence>
<evidence type="ECO:0000269" key="9">
    <source>
    </source>
</evidence>
<evidence type="ECO:0000303" key="10">
    <source>
    </source>
</evidence>
<evidence type="ECO:0000303" key="11">
    <source>
    </source>
</evidence>
<evidence type="ECO:0000305" key="12"/>
<evidence type="ECO:0000312" key="13">
    <source>
        <dbReference type="MGI" id="MGI:1916380"/>
    </source>
</evidence>